<gene>
    <name type="primary">ccmAE</name>
    <name type="synonym">ccmA2</name>
    <name type="synonym">ccmE2</name>
    <name type="ordered locus">SCH_3737</name>
</gene>
<dbReference type="EC" id="7.6.2.5" evidence="4"/>
<dbReference type="EMBL" id="AE017220">
    <property type="protein sequence ID" value="AAX67643.1"/>
    <property type="status" value="ALT_INIT"/>
    <property type="molecule type" value="Genomic_DNA"/>
</dbReference>
<dbReference type="SMR" id="Q57I19"/>
<dbReference type="KEGG" id="sec:SCH_3737"/>
<dbReference type="HOGENOM" id="CLU_071298_0_0_6"/>
<dbReference type="Proteomes" id="UP000000538">
    <property type="component" value="Chromosome"/>
</dbReference>
<dbReference type="GO" id="GO:0005886">
    <property type="term" value="C:plasma membrane"/>
    <property type="evidence" value="ECO:0007669"/>
    <property type="project" value="UniProtKB-SubCell"/>
</dbReference>
<dbReference type="GO" id="GO:0015439">
    <property type="term" value="F:ABC-type heme transporter activity"/>
    <property type="evidence" value="ECO:0007669"/>
    <property type="project" value="UniProtKB-EC"/>
</dbReference>
<dbReference type="GO" id="GO:0005524">
    <property type="term" value="F:ATP binding"/>
    <property type="evidence" value="ECO:0007669"/>
    <property type="project" value="UniProtKB-KW"/>
</dbReference>
<dbReference type="GO" id="GO:0016887">
    <property type="term" value="F:ATP hydrolysis activity"/>
    <property type="evidence" value="ECO:0007669"/>
    <property type="project" value="InterPro"/>
</dbReference>
<dbReference type="GO" id="GO:0020037">
    <property type="term" value="F:heme binding"/>
    <property type="evidence" value="ECO:0007669"/>
    <property type="project" value="InterPro"/>
</dbReference>
<dbReference type="GO" id="GO:0046872">
    <property type="term" value="F:metal ion binding"/>
    <property type="evidence" value="ECO:0007669"/>
    <property type="project" value="UniProtKB-KW"/>
</dbReference>
<dbReference type="GO" id="GO:0017004">
    <property type="term" value="P:cytochrome complex assembly"/>
    <property type="evidence" value="ECO:0007669"/>
    <property type="project" value="UniProtKB-KW"/>
</dbReference>
<dbReference type="CDD" id="cd03231">
    <property type="entry name" value="ABC_CcmA_heme_exporter"/>
    <property type="match status" value="1"/>
</dbReference>
<dbReference type="FunFam" id="2.40.50.140:FF:000104">
    <property type="entry name" value="Cytochrome c-type biogenesis protein CcmE"/>
    <property type="match status" value="1"/>
</dbReference>
<dbReference type="Gene3D" id="2.40.50.140">
    <property type="entry name" value="Nucleic acid-binding proteins"/>
    <property type="match status" value="1"/>
</dbReference>
<dbReference type="Gene3D" id="3.40.50.300">
    <property type="entry name" value="P-loop containing nucleotide triphosphate hydrolases"/>
    <property type="match status" value="1"/>
</dbReference>
<dbReference type="HAMAP" id="MF_01959">
    <property type="entry name" value="CcmE"/>
    <property type="match status" value="1"/>
</dbReference>
<dbReference type="InterPro" id="IPR003593">
    <property type="entry name" value="AAA+_ATPase"/>
</dbReference>
<dbReference type="InterPro" id="IPR003439">
    <property type="entry name" value="ABC_transporter-like_ATP-bd"/>
</dbReference>
<dbReference type="InterPro" id="IPR017871">
    <property type="entry name" value="ABC_transporter-like_CS"/>
</dbReference>
<dbReference type="InterPro" id="IPR005895">
    <property type="entry name" value="ABC_transptr_haem_export_CcmA"/>
</dbReference>
<dbReference type="InterPro" id="IPR004329">
    <property type="entry name" value="CcmE"/>
</dbReference>
<dbReference type="InterPro" id="IPR036127">
    <property type="entry name" value="CcmE-like_sf"/>
</dbReference>
<dbReference type="InterPro" id="IPR012340">
    <property type="entry name" value="NA-bd_OB-fold"/>
</dbReference>
<dbReference type="InterPro" id="IPR027417">
    <property type="entry name" value="P-loop_NTPase"/>
</dbReference>
<dbReference type="NCBIfam" id="TIGR01189">
    <property type="entry name" value="ccmA"/>
    <property type="match status" value="1"/>
</dbReference>
<dbReference type="NCBIfam" id="NF009635">
    <property type="entry name" value="PRK13150.1"/>
    <property type="match status" value="1"/>
</dbReference>
<dbReference type="NCBIfam" id="NF009638">
    <property type="entry name" value="PRK13165.1"/>
    <property type="match status" value="1"/>
</dbReference>
<dbReference type="NCBIfam" id="NF010061">
    <property type="entry name" value="PRK13538.1"/>
    <property type="match status" value="1"/>
</dbReference>
<dbReference type="PANTHER" id="PTHR43499">
    <property type="entry name" value="ABC TRANSPORTER I FAMILY MEMBER 1"/>
    <property type="match status" value="1"/>
</dbReference>
<dbReference type="PANTHER" id="PTHR43499:SF1">
    <property type="entry name" value="ABC TRANSPORTER I FAMILY MEMBER 1"/>
    <property type="match status" value="1"/>
</dbReference>
<dbReference type="Pfam" id="PF00005">
    <property type="entry name" value="ABC_tran"/>
    <property type="match status" value="1"/>
</dbReference>
<dbReference type="Pfam" id="PF03100">
    <property type="entry name" value="CcmE"/>
    <property type="match status" value="1"/>
</dbReference>
<dbReference type="SMART" id="SM00382">
    <property type="entry name" value="AAA"/>
    <property type="match status" value="1"/>
</dbReference>
<dbReference type="SUPFAM" id="SSF82093">
    <property type="entry name" value="Heme chaperone CcmE"/>
    <property type="match status" value="1"/>
</dbReference>
<dbReference type="SUPFAM" id="SSF52540">
    <property type="entry name" value="P-loop containing nucleoside triphosphate hydrolases"/>
    <property type="match status" value="1"/>
</dbReference>
<dbReference type="PROSITE" id="PS00211">
    <property type="entry name" value="ABC_TRANSPORTER_1"/>
    <property type="match status" value="1"/>
</dbReference>
<dbReference type="PROSITE" id="PS50893">
    <property type="entry name" value="ABC_TRANSPORTER_2"/>
    <property type="match status" value="1"/>
</dbReference>
<dbReference type="PROSITE" id="PS51243">
    <property type="entry name" value="CCMA"/>
    <property type="match status" value="1"/>
</dbReference>
<accession>Q57I19</accession>
<comment type="function">
    <text evidence="1">Part of the ABC transporter complex CcmAB involved in the biogenesis of c-type cytochromes; once thought to export heme, this seems not to be the case, but its exact role is uncertain. Responsible for energy coupling to the transport system (By similarity).</text>
</comment>
<comment type="function">
    <text evidence="1">Heme chaperone required for the biogenesis of c-type cytochromes. Transiently binds heme delivered by CcmC and transfers the heme to apo-cytochromes in a process facilitated by CcmF and CcmH (By similarity).</text>
</comment>
<comment type="catalytic activity">
    <reaction evidence="4">
        <text>heme b(in) + ATP + H2O = heme b(out) + ADP + phosphate + H(+)</text>
        <dbReference type="Rhea" id="RHEA:19261"/>
        <dbReference type="ChEBI" id="CHEBI:15377"/>
        <dbReference type="ChEBI" id="CHEBI:15378"/>
        <dbReference type="ChEBI" id="CHEBI:30616"/>
        <dbReference type="ChEBI" id="CHEBI:43474"/>
        <dbReference type="ChEBI" id="CHEBI:60344"/>
        <dbReference type="ChEBI" id="CHEBI:456216"/>
        <dbReference type="EC" id="7.6.2.5"/>
    </reaction>
</comment>
<comment type="subcellular location">
    <subcellularLocation>
        <location evidence="4">Cell inner membrane</location>
        <topology evidence="4">Peripheral membrane protein</topology>
    </subcellularLocation>
</comment>
<comment type="similarity">
    <text evidence="4">In the N-terminal section; belongs to the ABC transporter superfamily. CcmA exporter (TC 3.A.1.107) family.</text>
</comment>
<comment type="similarity">
    <text evidence="4">In the C-terminal section; belongs to the CcmE/CycJ family.</text>
</comment>
<comment type="caution">
    <text evidence="4">This sequence is a fusion of the duplicated copies ccmA2 and ccmE2, however, important parts of the proteins are missing and it is therefore probably not functional.</text>
</comment>
<comment type="caution">
    <text evidence="4">Could be the product of a pseudogene.</text>
</comment>
<comment type="sequence caution" evidence="4">
    <conflict type="erroneous initiation">
        <sequence resource="EMBL-CDS" id="AAX67643"/>
    </conflict>
</comment>
<feature type="chain" id="PRO_0000238860" description="Putative bifunctional cytochrome c-type biogenesis protein CcmAE">
    <location>
        <begin position="1"/>
        <end position="336"/>
    </location>
</feature>
<feature type="domain" description="ABC transporter">
    <location>
        <begin position="2"/>
        <end position="242"/>
    </location>
</feature>
<feature type="region of interest" description="Cytochrome c biogenesis ATP-binding export protein CcmA 2">
    <location>
        <begin position="1"/>
        <end position="199"/>
    </location>
</feature>
<feature type="region of interest" description="Cytochrome c-type biogenesis protein CcmE 2">
    <location>
        <begin position="196"/>
        <end position="336"/>
    </location>
</feature>
<feature type="region of interest" description="Disordered" evidence="3">
    <location>
        <begin position="307"/>
        <end position="336"/>
    </location>
</feature>
<feature type="binding site" evidence="2">
    <location>
        <begin position="34"/>
        <end position="41"/>
    </location>
    <ligand>
        <name>ATP</name>
        <dbReference type="ChEBI" id="CHEBI:30616"/>
    </ligand>
</feature>
<feature type="binding site" description="covalent" evidence="1">
    <location>
        <position position="307"/>
    </location>
    <ligand>
        <name>heme</name>
        <dbReference type="ChEBI" id="CHEBI:30413"/>
    </ligand>
</feature>
<feature type="binding site" description="axial binding residue" evidence="1">
    <location>
        <position position="311"/>
    </location>
    <ligand>
        <name>heme</name>
        <dbReference type="ChEBI" id="CHEBI:30413"/>
    </ligand>
    <ligandPart>
        <name>Fe</name>
        <dbReference type="ChEBI" id="CHEBI:18248"/>
    </ligandPart>
</feature>
<organism>
    <name type="scientific">Salmonella choleraesuis (strain SC-B67)</name>
    <dbReference type="NCBI Taxonomy" id="321314"/>
    <lineage>
        <taxon>Bacteria</taxon>
        <taxon>Pseudomonadati</taxon>
        <taxon>Pseudomonadota</taxon>
        <taxon>Gammaproteobacteria</taxon>
        <taxon>Enterobacterales</taxon>
        <taxon>Enterobacteriaceae</taxon>
        <taxon>Salmonella</taxon>
    </lineage>
</organism>
<sequence length="336" mass="37197">MLEARDLYCERDERTLFRGLSFTVDAGEWVQVTGGNGAGKTTLLRLLTGLARPDGGEVYWQGEPLRRVRDSFHRSLLWIGHQPGIKTRLTARENLHFFHPGDGARLPEALAQAGLAGFEDVPVARLSAGQQRRVALARLWLTRAALWVLDEPFTAIDVNGVARLTRRMAAHTAQGGMVILTTHQPLPGAADTVRRLALTTALVLYALRANIDLFYTPGEILYGKRETQQLPAVGQRLRVGGMVMPGSVRRDPDSLKVNFSLYDAEGSVTVSYEGILPDLFREGQGVVVQGTLEKGNHVLAHEVLAKHDENYTPPEVEKAMQENHRRPQRVDKDTSS</sequence>
<evidence type="ECO:0000250" key="1"/>
<evidence type="ECO:0000255" key="2"/>
<evidence type="ECO:0000256" key="3">
    <source>
        <dbReference type="SAM" id="MobiDB-lite"/>
    </source>
</evidence>
<evidence type="ECO:0000305" key="4"/>
<protein>
    <recommendedName>
        <fullName>Putative bifunctional cytochrome c-type biogenesis protein CcmAE</fullName>
    </recommendedName>
    <domain>
        <recommendedName>
            <fullName>Cytochrome c biogenesis ATP-binding export protein CcmA 2</fullName>
            <ecNumber evidence="4">7.6.2.5</ecNumber>
        </recommendedName>
        <alternativeName>
            <fullName>Heme exporter protein A 2</fullName>
        </alternativeName>
    </domain>
    <domain>
        <recommendedName>
            <fullName>Cytochrome c-type biogenesis protein CcmE 2</fullName>
        </recommendedName>
        <alternativeName>
            <fullName>Cytochrome c maturation protein E 2</fullName>
        </alternativeName>
        <alternativeName>
            <fullName>Heme chaperone CcmE 2</fullName>
        </alternativeName>
    </domain>
</protein>
<keyword id="KW-0067">ATP-binding</keyword>
<keyword id="KW-0997">Cell inner membrane</keyword>
<keyword id="KW-1003">Cell membrane</keyword>
<keyword id="KW-0201">Cytochrome c-type biogenesis</keyword>
<keyword id="KW-0349">Heme</keyword>
<keyword id="KW-0408">Iron</keyword>
<keyword id="KW-0472">Membrane</keyword>
<keyword id="KW-0479">Metal-binding</keyword>
<keyword id="KW-0547">Nucleotide-binding</keyword>
<keyword id="KW-1278">Translocase</keyword>
<keyword id="KW-0813">Transport</keyword>
<proteinExistence type="uncertain"/>
<name>CCMAE_SALCH</name>
<reference key="1">
    <citation type="journal article" date="2005" name="Nucleic Acids Res.">
        <title>The genome sequence of Salmonella enterica serovar Choleraesuis, a highly invasive and resistant zoonotic pathogen.</title>
        <authorList>
            <person name="Chiu C.-H."/>
            <person name="Tang P."/>
            <person name="Chu C."/>
            <person name="Hu S."/>
            <person name="Bao Q."/>
            <person name="Yu J."/>
            <person name="Chou Y.-Y."/>
            <person name="Wang H.-S."/>
            <person name="Lee Y.-S."/>
        </authorList>
    </citation>
    <scope>NUCLEOTIDE SEQUENCE [LARGE SCALE GENOMIC DNA]</scope>
    <source>
        <strain>SC-B67</strain>
    </source>
</reference>